<name>ACCD_PELPD</name>
<accession>A1AN64</accession>
<evidence type="ECO:0000255" key="1">
    <source>
        <dbReference type="HAMAP-Rule" id="MF_01395"/>
    </source>
</evidence>
<evidence type="ECO:0000255" key="2">
    <source>
        <dbReference type="PROSITE-ProRule" id="PRU01136"/>
    </source>
</evidence>
<protein>
    <recommendedName>
        <fullName evidence="1">Acetyl-coenzyme A carboxylase carboxyl transferase subunit beta</fullName>
        <shortName evidence="1">ACCase subunit beta</shortName>
        <shortName evidence="1">Acetyl-CoA carboxylase carboxyltransferase subunit beta</shortName>
        <ecNumber evidence="1">2.1.3.15</ecNumber>
    </recommendedName>
</protein>
<dbReference type="EC" id="2.1.3.15" evidence="1"/>
<dbReference type="EMBL" id="CP000482">
    <property type="protein sequence ID" value="ABK98784.1"/>
    <property type="molecule type" value="Genomic_DNA"/>
</dbReference>
<dbReference type="RefSeq" id="WP_011735086.1">
    <property type="nucleotide sequence ID" value="NC_008609.1"/>
</dbReference>
<dbReference type="SMR" id="A1AN64"/>
<dbReference type="STRING" id="338966.Ppro_1161"/>
<dbReference type="KEGG" id="ppd:Ppro_1161"/>
<dbReference type="eggNOG" id="COG0777">
    <property type="taxonomic scope" value="Bacteria"/>
</dbReference>
<dbReference type="HOGENOM" id="CLU_015486_1_0_7"/>
<dbReference type="OrthoDB" id="9772975at2"/>
<dbReference type="UniPathway" id="UPA00655">
    <property type="reaction ID" value="UER00711"/>
</dbReference>
<dbReference type="Proteomes" id="UP000006732">
    <property type="component" value="Chromosome"/>
</dbReference>
<dbReference type="GO" id="GO:0009329">
    <property type="term" value="C:acetate CoA-transferase complex"/>
    <property type="evidence" value="ECO:0007669"/>
    <property type="project" value="TreeGrafter"/>
</dbReference>
<dbReference type="GO" id="GO:0003989">
    <property type="term" value="F:acetyl-CoA carboxylase activity"/>
    <property type="evidence" value="ECO:0007669"/>
    <property type="project" value="InterPro"/>
</dbReference>
<dbReference type="GO" id="GO:0005524">
    <property type="term" value="F:ATP binding"/>
    <property type="evidence" value="ECO:0007669"/>
    <property type="project" value="UniProtKB-KW"/>
</dbReference>
<dbReference type="GO" id="GO:0016743">
    <property type="term" value="F:carboxyl- or carbamoyltransferase activity"/>
    <property type="evidence" value="ECO:0007669"/>
    <property type="project" value="UniProtKB-UniRule"/>
</dbReference>
<dbReference type="GO" id="GO:0008270">
    <property type="term" value="F:zinc ion binding"/>
    <property type="evidence" value="ECO:0007669"/>
    <property type="project" value="UniProtKB-UniRule"/>
</dbReference>
<dbReference type="GO" id="GO:0006633">
    <property type="term" value="P:fatty acid biosynthetic process"/>
    <property type="evidence" value="ECO:0007669"/>
    <property type="project" value="UniProtKB-KW"/>
</dbReference>
<dbReference type="GO" id="GO:2001295">
    <property type="term" value="P:malonyl-CoA biosynthetic process"/>
    <property type="evidence" value="ECO:0007669"/>
    <property type="project" value="UniProtKB-UniRule"/>
</dbReference>
<dbReference type="Gene3D" id="3.90.226.10">
    <property type="entry name" value="2-enoyl-CoA Hydratase, Chain A, domain 1"/>
    <property type="match status" value="1"/>
</dbReference>
<dbReference type="HAMAP" id="MF_01395">
    <property type="entry name" value="AcetylCoA_CT_beta"/>
    <property type="match status" value="1"/>
</dbReference>
<dbReference type="InterPro" id="IPR034733">
    <property type="entry name" value="AcCoA_carboxyl_beta"/>
</dbReference>
<dbReference type="InterPro" id="IPR000438">
    <property type="entry name" value="Acetyl_CoA_COase_Trfase_b_su"/>
</dbReference>
<dbReference type="InterPro" id="IPR029045">
    <property type="entry name" value="ClpP/crotonase-like_dom_sf"/>
</dbReference>
<dbReference type="InterPro" id="IPR011762">
    <property type="entry name" value="COA_CT_N"/>
</dbReference>
<dbReference type="InterPro" id="IPR041010">
    <property type="entry name" value="Znf-ACC"/>
</dbReference>
<dbReference type="NCBIfam" id="TIGR00515">
    <property type="entry name" value="accD"/>
    <property type="match status" value="1"/>
</dbReference>
<dbReference type="PANTHER" id="PTHR42995">
    <property type="entry name" value="ACETYL-COENZYME A CARBOXYLASE CARBOXYL TRANSFERASE SUBUNIT BETA, CHLOROPLASTIC"/>
    <property type="match status" value="1"/>
</dbReference>
<dbReference type="PANTHER" id="PTHR42995:SF5">
    <property type="entry name" value="ACETYL-COENZYME A CARBOXYLASE CARBOXYL TRANSFERASE SUBUNIT BETA, CHLOROPLASTIC"/>
    <property type="match status" value="1"/>
</dbReference>
<dbReference type="Pfam" id="PF01039">
    <property type="entry name" value="Carboxyl_trans"/>
    <property type="match status" value="1"/>
</dbReference>
<dbReference type="Pfam" id="PF17848">
    <property type="entry name" value="Zn_ribbon_ACC"/>
    <property type="match status" value="1"/>
</dbReference>
<dbReference type="PRINTS" id="PR01070">
    <property type="entry name" value="ACCCTRFRASEB"/>
</dbReference>
<dbReference type="SUPFAM" id="SSF52096">
    <property type="entry name" value="ClpP/crotonase"/>
    <property type="match status" value="1"/>
</dbReference>
<dbReference type="PROSITE" id="PS50980">
    <property type="entry name" value="COA_CT_NTER"/>
    <property type="match status" value="1"/>
</dbReference>
<organism>
    <name type="scientific">Pelobacter propionicus (strain DSM 2379 / NBRC 103807 / OttBd1)</name>
    <dbReference type="NCBI Taxonomy" id="338966"/>
    <lineage>
        <taxon>Bacteria</taxon>
        <taxon>Pseudomonadati</taxon>
        <taxon>Thermodesulfobacteriota</taxon>
        <taxon>Desulfuromonadia</taxon>
        <taxon>Desulfuromonadales</taxon>
        <taxon>Desulfuromonadaceae</taxon>
        <taxon>Pelobacter</taxon>
    </lineage>
</organism>
<comment type="function">
    <text evidence="1">Component of the acetyl coenzyme A carboxylase (ACC) complex. Biotin carboxylase (BC) catalyzes the carboxylation of biotin on its carrier protein (BCCP) and then the CO(2) group is transferred by the transcarboxylase to acetyl-CoA to form malonyl-CoA.</text>
</comment>
<comment type="catalytic activity">
    <reaction evidence="1">
        <text>N(6)-carboxybiotinyl-L-lysyl-[protein] + acetyl-CoA = N(6)-biotinyl-L-lysyl-[protein] + malonyl-CoA</text>
        <dbReference type="Rhea" id="RHEA:54728"/>
        <dbReference type="Rhea" id="RHEA-COMP:10505"/>
        <dbReference type="Rhea" id="RHEA-COMP:10506"/>
        <dbReference type="ChEBI" id="CHEBI:57288"/>
        <dbReference type="ChEBI" id="CHEBI:57384"/>
        <dbReference type="ChEBI" id="CHEBI:83144"/>
        <dbReference type="ChEBI" id="CHEBI:83145"/>
        <dbReference type="EC" id="2.1.3.15"/>
    </reaction>
</comment>
<comment type="cofactor">
    <cofactor evidence="1">
        <name>Zn(2+)</name>
        <dbReference type="ChEBI" id="CHEBI:29105"/>
    </cofactor>
    <text evidence="1">Binds 1 zinc ion per subunit.</text>
</comment>
<comment type="pathway">
    <text evidence="1">Lipid metabolism; malonyl-CoA biosynthesis; malonyl-CoA from acetyl-CoA: step 1/1.</text>
</comment>
<comment type="subunit">
    <text evidence="1">Acetyl-CoA carboxylase is a heterohexamer composed of biotin carboxyl carrier protein (AccB), biotin carboxylase (AccC) and two subunits each of ACCase subunit alpha (AccA) and ACCase subunit beta (AccD).</text>
</comment>
<comment type="subcellular location">
    <subcellularLocation>
        <location evidence="1">Cytoplasm</location>
    </subcellularLocation>
</comment>
<comment type="similarity">
    <text evidence="1">Belongs to the AccD/PCCB family.</text>
</comment>
<reference key="1">
    <citation type="submission" date="2006-10" db="EMBL/GenBank/DDBJ databases">
        <title>Complete sequence of chromosome of Pelobacter propionicus DSM 2379.</title>
        <authorList>
            <consortium name="US DOE Joint Genome Institute"/>
            <person name="Copeland A."/>
            <person name="Lucas S."/>
            <person name="Lapidus A."/>
            <person name="Barry K."/>
            <person name="Detter J.C."/>
            <person name="Glavina del Rio T."/>
            <person name="Hammon N."/>
            <person name="Israni S."/>
            <person name="Dalin E."/>
            <person name="Tice H."/>
            <person name="Pitluck S."/>
            <person name="Saunders E."/>
            <person name="Brettin T."/>
            <person name="Bruce D."/>
            <person name="Han C."/>
            <person name="Tapia R."/>
            <person name="Schmutz J."/>
            <person name="Larimer F."/>
            <person name="Land M."/>
            <person name="Hauser L."/>
            <person name="Kyrpides N."/>
            <person name="Kim E."/>
            <person name="Lovley D."/>
            <person name="Richardson P."/>
        </authorList>
    </citation>
    <scope>NUCLEOTIDE SEQUENCE [LARGE SCALE GENOMIC DNA]</scope>
    <source>
        <strain>DSM 2379 / NBRC 103807 / OttBd1</strain>
    </source>
</reference>
<proteinExistence type="inferred from homology"/>
<feature type="chain" id="PRO_0000359014" description="Acetyl-coenzyme A carboxylase carboxyl transferase subunit beta">
    <location>
        <begin position="1"/>
        <end position="284"/>
    </location>
</feature>
<feature type="domain" description="CoA carboxyltransferase N-terminal" evidence="2">
    <location>
        <begin position="25"/>
        <end position="284"/>
    </location>
</feature>
<feature type="zinc finger region" description="C4-type" evidence="1">
    <location>
        <begin position="29"/>
        <end position="51"/>
    </location>
</feature>
<feature type="binding site" evidence="1">
    <location>
        <position position="29"/>
    </location>
    <ligand>
        <name>Zn(2+)</name>
        <dbReference type="ChEBI" id="CHEBI:29105"/>
    </ligand>
</feature>
<feature type="binding site" evidence="1">
    <location>
        <position position="32"/>
    </location>
    <ligand>
        <name>Zn(2+)</name>
        <dbReference type="ChEBI" id="CHEBI:29105"/>
    </ligand>
</feature>
<feature type="binding site" evidence="1">
    <location>
        <position position="48"/>
    </location>
    <ligand>
        <name>Zn(2+)</name>
        <dbReference type="ChEBI" id="CHEBI:29105"/>
    </ligand>
</feature>
<feature type="binding site" evidence="1">
    <location>
        <position position="51"/>
    </location>
    <ligand>
        <name>Zn(2+)</name>
        <dbReference type="ChEBI" id="CHEBI:29105"/>
    </ligand>
</feature>
<gene>
    <name evidence="1" type="primary">accD</name>
    <name type="ordered locus">Ppro_1161</name>
</gene>
<keyword id="KW-0067">ATP-binding</keyword>
<keyword id="KW-0963">Cytoplasm</keyword>
<keyword id="KW-0275">Fatty acid biosynthesis</keyword>
<keyword id="KW-0276">Fatty acid metabolism</keyword>
<keyword id="KW-0444">Lipid biosynthesis</keyword>
<keyword id="KW-0443">Lipid metabolism</keyword>
<keyword id="KW-0479">Metal-binding</keyword>
<keyword id="KW-0547">Nucleotide-binding</keyword>
<keyword id="KW-1185">Reference proteome</keyword>
<keyword id="KW-0808">Transferase</keyword>
<keyword id="KW-0862">Zinc</keyword>
<keyword id="KW-0863">Zinc-finger</keyword>
<sequence length="284" mass="30777">MSWFHRERAGINRTQIKKSRVPQGMWVKCPGCSATLLAKDLDANLNVCPTCGHHHRIGARRRLESLLDAATWQELDSGMTSVDFLQFKDSKSYQERIDSALSKGGSRDAVVCVEGSIEGTAVQVAVFDFSFMGGSMGSVVGEKITRAIERGVQKRQPVIIVSASGGARMQESILSLMQMAKTSAALAKLKDAGLPFISILTDPTTGGVTASFAMLGDINIAEPKALIGFAGPRVIEQTLRQKLPDGFQRAEYLLEHGMLDVIVPRTEMRAKLASILGILYRPAA</sequence>